<keyword id="KW-0067">ATP-binding</keyword>
<keyword id="KW-0418">Kinase</keyword>
<keyword id="KW-0460">Magnesium</keyword>
<keyword id="KW-0479">Metal-binding</keyword>
<keyword id="KW-0547">Nucleotide-binding</keyword>
<keyword id="KW-0614">Plasmid</keyword>
<keyword id="KW-0784">Thiamine biosynthesis</keyword>
<keyword id="KW-0808">Transferase</keyword>
<proteinExistence type="inferred from homology"/>
<gene>
    <name evidence="1" type="primary">thiM</name>
    <name type="ordered locus">RHECIAT_PA0000267</name>
</gene>
<evidence type="ECO:0000255" key="1">
    <source>
        <dbReference type="HAMAP-Rule" id="MF_00228"/>
    </source>
</evidence>
<geneLocation type="plasmid">
    <name>pA</name>
</geneLocation>
<sequence length="258" mass="26320">MLEAMREKPPLVHCITNYVAMNIAANVLLASGASPAMVHAPEEAGEFAGIASALTVNIGTLSTQWLDGMRAAAKAAASSGKPWVLDPVAHYATAFRRQAVADLLALKPTIIRGNASEIIALAGGESRGQGVDSRDPVEQAEDSARRLAERQQAIVAVTGAVDFVTDGNRAVRIKGGSVLMPQVTALGCALTCLVGAFAATAPEDLFGATVAALATFAVAGEDAALGAAGPGSFAWRFLDALAALDGEALDARARVSIA</sequence>
<reference key="1">
    <citation type="journal article" date="2010" name="Appl. Environ. Microbiol.">
        <title>Conserved symbiotic plasmid DNA sequences in the multireplicon pangenomic structure of Rhizobium etli.</title>
        <authorList>
            <person name="Gonzalez V."/>
            <person name="Acosta J.L."/>
            <person name="Santamaria R.I."/>
            <person name="Bustos P."/>
            <person name="Fernandez J.L."/>
            <person name="Hernandez Gonzalez I.L."/>
            <person name="Diaz R."/>
            <person name="Flores M."/>
            <person name="Palacios R."/>
            <person name="Mora J."/>
            <person name="Davila G."/>
        </authorList>
    </citation>
    <scope>NUCLEOTIDE SEQUENCE [LARGE SCALE GENOMIC DNA]</scope>
    <source>
        <strain>CIAT 652</strain>
    </source>
</reference>
<protein>
    <recommendedName>
        <fullName evidence="1">Hydroxyethylthiazole kinase</fullName>
        <ecNumber evidence="1">2.7.1.50</ecNumber>
    </recommendedName>
    <alternativeName>
        <fullName evidence="1">4-methyl-5-beta-hydroxyethylthiazole kinase</fullName>
        <shortName evidence="1">TH kinase</shortName>
        <shortName evidence="1">Thz kinase</shortName>
    </alternativeName>
</protein>
<feature type="chain" id="PRO_0000383890" description="Hydroxyethylthiazole kinase">
    <location>
        <begin position="1"/>
        <end position="258"/>
    </location>
</feature>
<feature type="binding site" evidence="1">
    <location>
        <position position="37"/>
    </location>
    <ligand>
        <name>substrate</name>
    </ligand>
</feature>
<feature type="binding site" evidence="1">
    <location>
        <position position="112"/>
    </location>
    <ligand>
        <name>ATP</name>
        <dbReference type="ChEBI" id="CHEBI:30616"/>
    </ligand>
</feature>
<feature type="binding site" evidence="1">
    <location>
        <position position="158"/>
    </location>
    <ligand>
        <name>ATP</name>
        <dbReference type="ChEBI" id="CHEBI:30616"/>
    </ligand>
</feature>
<feature type="binding site" evidence="1">
    <location>
        <position position="185"/>
    </location>
    <ligand>
        <name>substrate</name>
    </ligand>
</feature>
<comment type="function">
    <text evidence="1">Catalyzes the phosphorylation of the hydroxyl group of 4-methyl-5-beta-hydroxyethylthiazole (THZ).</text>
</comment>
<comment type="catalytic activity">
    <reaction evidence="1">
        <text>5-(2-hydroxyethyl)-4-methylthiazole + ATP = 4-methyl-5-(2-phosphooxyethyl)-thiazole + ADP + H(+)</text>
        <dbReference type="Rhea" id="RHEA:24212"/>
        <dbReference type="ChEBI" id="CHEBI:15378"/>
        <dbReference type="ChEBI" id="CHEBI:17957"/>
        <dbReference type="ChEBI" id="CHEBI:30616"/>
        <dbReference type="ChEBI" id="CHEBI:58296"/>
        <dbReference type="ChEBI" id="CHEBI:456216"/>
        <dbReference type="EC" id="2.7.1.50"/>
    </reaction>
</comment>
<comment type="cofactor">
    <cofactor evidence="1">
        <name>Mg(2+)</name>
        <dbReference type="ChEBI" id="CHEBI:18420"/>
    </cofactor>
</comment>
<comment type="pathway">
    <text evidence="1">Cofactor biosynthesis; thiamine diphosphate biosynthesis; 4-methyl-5-(2-phosphoethyl)-thiazole from 5-(2-hydroxyethyl)-4-methylthiazole: step 1/1.</text>
</comment>
<comment type="similarity">
    <text evidence="1">Belongs to the Thz kinase family.</text>
</comment>
<accession>B3Q1Q5</accession>
<name>THIM_RHIE6</name>
<dbReference type="EC" id="2.7.1.50" evidence="1"/>
<dbReference type="EMBL" id="CP001075">
    <property type="protein sequence ID" value="ACE93611.1"/>
    <property type="molecule type" value="Genomic_DNA"/>
</dbReference>
<dbReference type="SMR" id="B3Q1Q5"/>
<dbReference type="KEGG" id="rec:RHECIAT_PA0000267"/>
<dbReference type="HOGENOM" id="CLU_019943_0_1_5"/>
<dbReference type="UniPathway" id="UPA00060">
    <property type="reaction ID" value="UER00139"/>
</dbReference>
<dbReference type="Proteomes" id="UP000008817">
    <property type="component" value="Plasmid pA"/>
</dbReference>
<dbReference type="GO" id="GO:0005524">
    <property type="term" value="F:ATP binding"/>
    <property type="evidence" value="ECO:0007669"/>
    <property type="project" value="UniProtKB-UniRule"/>
</dbReference>
<dbReference type="GO" id="GO:0004417">
    <property type="term" value="F:hydroxyethylthiazole kinase activity"/>
    <property type="evidence" value="ECO:0007669"/>
    <property type="project" value="UniProtKB-UniRule"/>
</dbReference>
<dbReference type="GO" id="GO:0000287">
    <property type="term" value="F:magnesium ion binding"/>
    <property type="evidence" value="ECO:0007669"/>
    <property type="project" value="UniProtKB-UniRule"/>
</dbReference>
<dbReference type="GO" id="GO:0009228">
    <property type="term" value="P:thiamine biosynthetic process"/>
    <property type="evidence" value="ECO:0007669"/>
    <property type="project" value="UniProtKB-KW"/>
</dbReference>
<dbReference type="GO" id="GO:0009229">
    <property type="term" value="P:thiamine diphosphate biosynthetic process"/>
    <property type="evidence" value="ECO:0007669"/>
    <property type="project" value="UniProtKB-UniRule"/>
</dbReference>
<dbReference type="CDD" id="cd01170">
    <property type="entry name" value="THZ_kinase"/>
    <property type="match status" value="1"/>
</dbReference>
<dbReference type="Gene3D" id="3.40.1190.20">
    <property type="match status" value="1"/>
</dbReference>
<dbReference type="HAMAP" id="MF_00228">
    <property type="entry name" value="Thz_kinase"/>
    <property type="match status" value="1"/>
</dbReference>
<dbReference type="InterPro" id="IPR000417">
    <property type="entry name" value="Hyethyz_kinase"/>
</dbReference>
<dbReference type="InterPro" id="IPR029056">
    <property type="entry name" value="Ribokinase-like"/>
</dbReference>
<dbReference type="NCBIfam" id="NF006830">
    <property type="entry name" value="PRK09355.1"/>
    <property type="match status" value="1"/>
</dbReference>
<dbReference type="NCBIfam" id="TIGR00694">
    <property type="entry name" value="thiM"/>
    <property type="match status" value="1"/>
</dbReference>
<dbReference type="Pfam" id="PF02110">
    <property type="entry name" value="HK"/>
    <property type="match status" value="1"/>
</dbReference>
<dbReference type="PIRSF" id="PIRSF000513">
    <property type="entry name" value="Thz_kinase"/>
    <property type="match status" value="1"/>
</dbReference>
<dbReference type="PRINTS" id="PR01099">
    <property type="entry name" value="HYETHTZKNASE"/>
</dbReference>
<dbReference type="SUPFAM" id="SSF53613">
    <property type="entry name" value="Ribokinase-like"/>
    <property type="match status" value="1"/>
</dbReference>
<organism>
    <name type="scientific">Rhizobium etli (strain CIAT 652)</name>
    <dbReference type="NCBI Taxonomy" id="491916"/>
    <lineage>
        <taxon>Bacteria</taxon>
        <taxon>Pseudomonadati</taxon>
        <taxon>Pseudomonadota</taxon>
        <taxon>Alphaproteobacteria</taxon>
        <taxon>Hyphomicrobiales</taxon>
        <taxon>Rhizobiaceae</taxon>
        <taxon>Rhizobium/Agrobacterium group</taxon>
        <taxon>Rhizobium</taxon>
    </lineage>
</organism>